<organism>
    <name type="scientific">Vibrio cholerae serotype O1 (strain ATCC 39541 / Classical Ogawa 395 / O395)</name>
    <dbReference type="NCBI Taxonomy" id="345073"/>
    <lineage>
        <taxon>Bacteria</taxon>
        <taxon>Pseudomonadati</taxon>
        <taxon>Pseudomonadota</taxon>
        <taxon>Gammaproteobacteria</taxon>
        <taxon>Vibrionales</taxon>
        <taxon>Vibrionaceae</taxon>
        <taxon>Vibrio</taxon>
    </lineage>
</organism>
<feature type="signal peptide" evidence="1">
    <location>
        <begin position="1"/>
        <end position="23"/>
    </location>
</feature>
<feature type="chain" id="PRO_1000073695" description="GlcNAc-binding protein A">
    <location>
        <begin position="24"/>
        <end position="485"/>
    </location>
</feature>
<feature type="domain" description="Chitin-binding type-4" evidence="1">
    <location>
        <begin position="24"/>
        <end position="201"/>
    </location>
</feature>
<feature type="domain" description="Chitin-binding type-3" evidence="1">
    <location>
        <begin position="437"/>
        <end position="478"/>
    </location>
</feature>
<reference key="1">
    <citation type="submission" date="2007-03" db="EMBL/GenBank/DDBJ databases">
        <authorList>
            <person name="Heidelberg J."/>
        </authorList>
    </citation>
    <scope>NUCLEOTIDE SEQUENCE [LARGE SCALE GENOMIC DNA]</scope>
    <source>
        <strain>ATCC 39541 / Classical Ogawa 395 / O395</strain>
    </source>
</reference>
<reference key="2">
    <citation type="journal article" date="2008" name="PLoS ONE">
        <title>A recalibrated molecular clock and independent origins for the cholera pandemic clones.</title>
        <authorList>
            <person name="Feng L."/>
            <person name="Reeves P.R."/>
            <person name="Lan R."/>
            <person name="Ren Y."/>
            <person name="Gao C."/>
            <person name="Zhou Z."/>
            <person name="Ren Y."/>
            <person name="Cheng J."/>
            <person name="Wang W."/>
            <person name="Wang J."/>
            <person name="Qian W."/>
            <person name="Li D."/>
            <person name="Wang L."/>
        </authorList>
    </citation>
    <scope>NUCLEOTIDE SEQUENCE [LARGE SCALE GENOMIC DNA]</scope>
    <source>
        <strain>ATCC 39541 / Classical Ogawa 395 / O395</strain>
    </source>
</reference>
<accession>A5F0H4</accession>
<accession>C3M6A5</accession>
<proteinExistence type="inferred from homology"/>
<protein>
    <recommendedName>
        <fullName evidence="1">GlcNAc-binding protein A</fullName>
    </recommendedName>
</protein>
<evidence type="ECO:0000255" key="1">
    <source>
        <dbReference type="HAMAP-Rule" id="MF_01905"/>
    </source>
</evidence>
<keyword id="KW-0147">Chitin-binding</keyword>
<keyword id="KW-0964">Secreted</keyword>
<keyword id="KW-0732">Signal</keyword>
<dbReference type="EMBL" id="CP000626">
    <property type="protein sequence ID" value="ABQ18997.1"/>
    <property type="molecule type" value="Genomic_DNA"/>
</dbReference>
<dbReference type="EMBL" id="CP001236">
    <property type="protein sequence ID" value="ACP11668.1"/>
    <property type="molecule type" value="Genomic_DNA"/>
</dbReference>
<dbReference type="RefSeq" id="WP_000744638.1">
    <property type="nucleotide sequence ID" value="NZ_JAACZH010000012.1"/>
</dbReference>
<dbReference type="SMR" id="A5F0H4"/>
<dbReference type="CAZy" id="AA10">
    <property type="family name" value="Auxiliary Activities 10"/>
</dbReference>
<dbReference type="CAZy" id="CBM73">
    <property type="family name" value="Carbohydrate-Binding Module Family 73"/>
</dbReference>
<dbReference type="GeneID" id="89512811"/>
<dbReference type="KEGG" id="vco:VC0395_0423"/>
<dbReference type="KEGG" id="vcr:VC395_A0835"/>
<dbReference type="PATRIC" id="fig|345073.21.peg.3566"/>
<dbReference type="eggNOG" id="COG3397">
    <property type="taxonomic scope" value="Bacteria"/>
</dbReference>
<dbReference type="HOGENOM" id="CLU_039396_2_0_6"/>
<dbReference type="OrthoDB" id="3675244at2"/>
<dbReference type="Proteomes" id="UP000000249">
    <property type="component" value="Chromosome 1"/>
</dbReference>
<dbReference type="GO" id="GO:0005576">
    <property type="term" value="C:extracellular region"/>
    <property type="evidence" value="ECO:0007669"/>
    <property type="project" value="UniProtKB-SubCell"/>
</dbReference>
<dbReference type="GO" id="GO:0008061">
    <property type="term" value="F:chitin binding"/>
    <property type="evidence" value="ECO:0007669"/>
    <property type="project" value="UniProtKB-UniRule"/>
</dbReference>
<dbReference type="CDD" id="cd21177">
    <property type="entry name" value="LPMO_AA10"/>
    <property type="match status" value="1"/>
</dbReference>
<dbReference type="FunFam" id="2.70.50.50:FF:000001">
    <property type="entry name" value="Chitin-binding protein"/>
    <property type="match status" value="1"/>
</dbReference>
<dbReference type="FunFam" id="2.60.40.2550:FF:000001">
    <property type="entry name" value="GlcNAc-binding protein A"/>
    <property type="match status" value="1"/>
</dbReference>
<dbReference type="Gene3D" id="2.60.40.2550">
    <property type="match status" value="1"/>
</dbReference>
<dbReference type="Gene3D" id="3.30.70.2150">
    <property type="match status" value="1"/>
</dbReference>
<dbReference type="Gene3D" id="2.70.50.50">
    <property type="entry name" value="chitin-binding protein cbp21"/>
    <property type="match status" value="1"/>
</dbReference>
<dbReference type="HAMAP" id="MF_01905">
    <property type="entry name" value="GbpA"/>
    <property type="match status" value="1"/>
</dbReference>
<dbReference type="InterPro" id="IPR004302">
    <property type="entry name" value="Cellulose/chitin-bd_N"/>
</dbReference>
<dbReference type="InterPro" id="IPR041029">
    <property type="entry name" value="GbpA_2"/>
</dbReference>
<dbReference type="InterPro" id="IPR054063">
    <property type="entry name" value="GbpA_D3"/>
</dbReference>
<dbReference type="InterPro" id="IPR020879">
    <property type="entry name" value="GlcNAc-bd_A"/>
</dbReference>
<dbReference type="InterPro" id="IPR051024">
    <property type="entry name" value="GlcNAc_Chitin_IntDeg"/>
</dbReference>
<dbReference type="InterPro" id="IPR014756">
    <property type="entry name" value="Ig_E-set"/>
</dbReference>
<dbReference type="NCBIfam" id="NF009690">
    <property type="entry name" value="PRK13211.1"/>
    <property type="match status" value="1"/>
</dbReference>
<dbReference type="PANTHER" id="PTHR34823:SF1">
    <property type="entry name" value="CHITIN-BINDING TYPE-4 DOMAIN-CONTAINING PROTEIN"/>
    <property type="match status" value="1"/>
</dbReference>
<dbReference type="PANTHER" id="PTHR34823">
    <property type="entry name" value="GLCNAC-BINDING PROTEIN A"/>
    <property type="match status" value="1"/>
</dbReference>
<dbReference type="Pfam" id="PF18416">
    <property type="entry name" value="GbpA_2"/>
    <property type="match status" value="1"/>
</dbReference>
<dbReference type="Pfam" id="PF21868">
    <property type="entry name" value="GbpA_D3"/>
    <property type="match status" value="1"/>
</dbReference>
<dbReference type="Pfam" id="PF03067">
    <property type="entry name" value="LPMO_10"/>
    <property type="match status" value="1"/>
</dbReference>
<dbReference type="SUPFAM" id="SSF81296">
    <property type="entry name" value="E set domains"/>
    <property type="match status" value="1"/>
</dbReference>
<name>GBPA_VIBC3</name>
<gene>
    <name evidence="1" type="primary">gbpA</name>
    <name type="ordered locus">VC0395_0423</name>
    <name type="ordered locus">VC395_A0835</name>
</gene>
<sequence length="485" mass="53628">MKKQPKMTAIALILSGISGLAYGHGYVSAVENGVAEGRVTLCKFAANGTGEKNTHCGAIQYEPQSVEGPDGFPVTGPRDGKIASAESALAAALDEQTADRWVKRPIQAGPQTFEWTFTANHVTKDWKYYITKPNWNPNQPLSRDAFDLNPFCVVEGNMVQPPKRVSHECIVPEREGYQVILAVWDVGDTAASFYNVIDVKFDGNGPVLPDWNPAGQIIPSMDLSIGDTVYTRVFDNEGENPAYRTELKIDSETLTKANQWSYALATKINQTQKQQRAGQLNGDQFVPVYGTNPIYLKEGSGLKSVEIGYQIEAPQPEYSLTVSGLAKEYEIGEQPIQLDLTLEAQGEMSAELTVYNHHQKPLASWSQAMTDGELKSVTLELSEAKAGHHMLVSRIKDRDGNLQDQQTLDFMLVEPQTPPTPGDYDFVFPNGLKEYVAGTKVLASDGAIYQCKPWPYSGYCQQWTSNATQYQPGTGSHWEMAWDKR</sequence>
<comment type="function">
    <text evidence="1">Probably interacts with GlcNAc residues. May promote attachment to both epithelial cell surfaces and chitin.</text>
</comment>
<comment type="subcellular location">
    <subcellularLocation>
        <location evidence="1">Secreted</location>
    </subcellularLocation>
</comment>
<comment type="similarity">
    <text evidence="1">Belongs to the GbpA family.</text>
</comment>